<keyword id="KW-0165">Cleavage on pair of basic residues</keyword>
<keyword id="KW-1015">Disulfide bond</keyword>
<keyword id="KW-0372">Hormone</keyword>
<keyword id="KW-1185">Reference proteome</keyword>
<keyword id="KW-0964">Secreted</keyword>
<keyword id="KW-0732">Signal</keyword>
<keyword id="KW-0838">Vasoactive</keyword>
<evidence type="ECO:0000250" key="1"/>
<evidence type="ECO:0000250" key="2">
    <source>
        <dbReference type="UniProtKB" id="P18145"/>
    </source>
</evidence>
<evidence type="ECO:0000255" key="3"/>
<evidence type="ECO:0000256" key="4">
    <source>
        <dbReference type="SAM" id="MobiDB-lite"/>
    </source>
</evidence>
<evidence type="ECO:0000269" key="5">
    <source>
    </source>
</evidence>
<evidence type="ECO:0000303" key="6">
    <source>
    </source>
</evidence>
<evidence type="ECO:0000305" key="7"/>
<evidence type="ECO:0000312" key="8">
    <source>
        <dbReference type="EMBL" id="BAC65997.1"/>
    </source>
</evidence>
<proteinExistence type="evidence at transcript level"/>
<comment type="function">
    <text evidence="2 5 6">Exhibits natriuretic and vasodepressant activity. Has cGMP-stimulating activity. May help to regulate body fluid homeostasis in a variety of aquatic environments.</text>
</comment>
<comment type="subcellular location">
    <subcellularLocation>
        <location evidence="7">Secreted</location>
    </subcellularLocation>
</comment>
<comment type="tissue specificity">
    <text evidence="5">Spinal cord, kidney, ovary, heart and spleen, and to a lower extent in brain and liver.</text>
</comment>
<comment type="similarity">
    <text evidence="3">Belongs to the natriuretic peptide family.</text>
</comment>
<reference evidence="7 8" key="1">
    <citation type="journal article" date="2003" name="Proc. Natl. Acad. Sci. U.S.A.">
        <title>Four functionally distinct C-type natriuretic peptides found in fish reveal evolutionary history of the natriuretic peptide system.</title>
        <authorList>
            <person name="Inoue K."/>
            <person name="Naruse K."/>
            <person name="Yamagami S."/>
            <person name="Mitani H."/>
            <person name="Suzuki N."/>
            <person name="Takei Y."/>
        </authorList>
    </citation>
    <scope>NUCLEOTIDE SEQUENCE [MRNA]</scope>
    <scope>FUNCTION</scope>
    <scope>TISSUE SPECIFICITY</scope>
    <scope>SYNTHESIS</scope>
    <source>
        <tissue evidence="8">Heart</tissue>
    </source>
</reference>
<sequence length="112" mass="12522">MSLRAFMLCVCLLLQSVGARPASELQNLERLLQDQLSSTEHPEEDRLDRTREEPQLGGSSSREAADESALTRLFADLLRTSKRSWGRYKKGGMRSCFGVRLERIGSFSGLGC</sequence>
<protein>
    <recommendedName>
        <fullName>C-type natriuretic peptide 3</fullName>
    </recommendedName>
</protein>
<gene>
    <name evidence="8" type="primary">cnp-3</name>
</gene>
<name>ANFC3_ORYLA</name>
<accession>Q800I8</accession>
<dbReference type="EMBL" id="AB091698">
    <property type="protein sequence ID" value="BAC65997.1"/>
    <property type="molecule type" value="mRNA"/>
</dbReference>
<dbReference type="FunCoup" id="Q800I8">
    <property type="interactions" value="27"/>
</dbReference>
<dbReference type="STRING" id="8090.ENSORLP00000038693"/>
<dbReference type="KEGG" id="ola:100049238"/>
<dbReference type="CTD" id="567953"/>
<dbReference type="eggNOG" id="ENOG502S7N9">
    <property type="taxonomic scope" value="Eukaryota"/>
</dbReference>
<dbReference type="HOGENOM" id="CLU_160791_0_0_1"/>
<dbReference type="InParanoid" id="Q800I8"/>
<dbReference type="OMA" id="WTRNTRD"/>
<dbReference type="OrthoDB" id="8834370at2759"/>
<dbReference type="Proteomes" id="UP000001038">
    <property type="component" value="Unplaced"/>
</dbReference>
<dbReference type="Proteomes" id="UP000265180">
    <property type="component" value="Chromosome 9"/>
</dbReference>
<dbReference type="Proteomes" id="UP000265200">
    <property type="component" value="Chromosome 9"/>
</dbReference>
<dbReference type="GO" id="GO:0005576">
    <property type="term" value="C:extracellular region"/>
    <property type="evidence" value="ECO:0007669"/>
    <property type="project" value="UniProtKB-SubCell"/>
</dbReference>
<dbReference type="GO" id="GO:0005179">
    <property type="term" value="F:hormone activity"/>
    <property type="evidence" value="ECO:0000318"/>
    <property type="project" value="GO_Central"/>
</dbReference>
<dbReference type="GO" id="GO:0051427">
    <property type="term" value="F:hormone receptor binding"/>
    <property type="evidence" value="ECO:0000318"/>
    <property type="project" value="GO_Central"/>
</dbReference>
<dbReference type="GO" id="GO:0097746">
    <property type="term" value="P:blood vessel diameter maintenance"/>
    <property type="evidence" value="ECO:0007669"/>
    <property type="project" value="UniProtKB-KW"/>
</dbReference>
<dbReference type="GO" id="GO:0006182">
    <property type="term" value="P:cGMP biosynthetic process"/>
    <property type="evidence" value="ECO:0000318"/>
    <property type="project" value="GO_Central"/>
</dbReference>
<dbReference type="GO" id="GO:0007168">
    <property type="term" value="P:receptor guanylyl cyclase signaling pathway"/>
    <property type="evidence" value="ECO:0000318"/>
    <property type="project" value="GO_Central"/>
</dbReference>
<dbReference type="InterPro" id="IPR002406">
    <property type="entry name" value="C_natriurtcpep"/>
</dbReference>
<dbReference type="InterPro" id="IPR000663">
    <property type="entry name" value="Natr_peptide"/>
</dbReference>
<dbReference type="InterPro" id="IPR030480">
    <property type="entry name" value="Natr_peptide_CS"/>
</dbReference>
<dbReference type="PANTHER" id="PTHR12167">
    <property type="entry name" value="C-TYPE NATRIURETIC PEPTIDE"/>
    <property type="match status" value="1"/>
</dbReference>
<dbReference type="PANTHER" id="PTHR12167:SF5">
    <property type="entry name" value="C-TYPE NATRIURETIC PEPTIDE 3-LIKE PRECURSOR"/>
    <property type="match status" value="1"/>
</dbReference>
<dbReference type="Pfam" id="PF00212">
    <property type="entry name" value="ANP"/>
    <property type="match status" value="1"/>
</dbReference>
<dbReference type="PRINTS" id="PR00713">
    <property type="entry name" value="CNATPEPTIDE"/>
</dbReference>
<dbReference type="SMART" id="SM00183">
    <property type="entry name" value="NAT_PEP"/>
    <property type="match status" value="1"/>
</dbReference>
<dbReference type="PROSITE" id="PS00263">
    <property type="entry name" value="NATRIURETIC_PEPTIDE"/>
    <property type="match status" value="1"/>
</dbReference>
<feature type="signal peptide" evidence="3">
    <location>
        <begin position="1"/>
        <end position="19"/>
    </location>
</feature>
<feature type="propeptide" id="PRO_0000001597" evidence="1">
    <location>
        <begin position="20"/>
        <end position="90"/>
    </location>
</feature>
<feature type="peptide" id="PRO_0000001598" description="C-type natriuretic peptide 3">
    <location>
        <begin position="91"/>
        <end position="112"/>
    </location>
</feature>
<feature type="region of interest" description="Disordered" evidence="4">
    <location>
        <begin position="33"/>
        <end position="67"/>
    </location>
</feature>
<feature type="compositionally biased region" description="Basic and acidic residues" evidence="4">
    <location>
        <begin position="40"/>
        <end position="54"/>
    </location>
</feature>
<feature type="disulfide bond" evidence="2">
    <location>
        <begin position="96"/>
        <end position="112"/>
    </location>
</feature>
<organism>
    <name type="scientific">Oryzias latipes</name>
    <name type="common">Japanese rice fish</name>
    <name type="synonym">Japanese killifish</name>
    <dbReference type="NCBI Taxonomy" id="8090"/>
    <lineage>
        <taxon>Eukaryota</taxon>
        <taxon>Metazoa</taxon>
        <taxon>Chordata</taxon>
        <taxon>Craniata</taxon>
        <taxon>Vertebrata</taxon>
        <taxon>Euteleostomi</taxon>
        <taxon>Actinopterygii</taxon>
        <taxon>Neopterygii</taxon>
        <taxon>Teleostei</taxon>
        <taxon>Neoteleostei</taxon>
        <taxon>Acanthomorphata</taxon>
        <taxon>Ovalentaria</taxon>
        <taxon>Atherinomorphae</taxon>
        <taxon>Beloniformes</taxon>
        <taxon>Adrianichthyidae</taxon>
        <taxon>Oryziinae</taxon>
        <taxon>Oryzias</taxon>
    </lineage>
</organism>